<feature type="chain" id="PRO_1000077561" description="NH(3)-dependent NAD(+) synthetase">
    <location>
        <begin position="1"/>
        <end position="276"/>
    </location>
</feature>
<feature type="binding site" evidence="1">
    <location>
        <begin position="39"/>
        <end position="46"/>
    </location>
    <ligand>
        <name>ATP</name>
        <dbReference type="ChEBI" id="CHEBI:30616"/>
    </ligand>
</feature>
<feature type="binding site" evidence="1">
    <location>
        <position position="45"/>
    </location>
    <ligand>
        <name>Mg(2+)</name>
        <dbReference type="ChEBI" id="CHEBI:18420"/>
    </ligand>
</feature>
<feature type="binding site" evidence="1">
    <location>
        <position position="123"/>
    </location>
    <ligand>
        <name>deamido-NAD(+)</name>
        <dbReference type="ChEBI" id="CHEBI:58437"/>
    </ligand>
</feature>
<feature type="binding site" evidence="1">
    <location>
        <position position="143"/>
    </location>
    <ligand>
        <name>ATP</name>
        <dbReference type="ChEBI" id="CHEBI:30616"/>
    </ligand>
</feature>
<feature type="binding site" evidence="1">
    <location>
        <position position="148"/>
    </location>
    <ligand>
        <name>Mg(2+)</name>
        <dbReference type="ChEBI" id="CHEBI:18420"/>
    </ligand>
</feature>
<feature type="binding site" evidence="1">
    <location>
        <position position="156"/>
    </location>
    <ligand>
        <name>deamido-NAD(+)</name>
        <dbReference type="ChEBI" id="CHEBI:58437"/>
    </ligand>
</feature>
<feature type="binding site" evidence="1">
    <location>
        <position position="163"/>
    </location>
    <ligand>
        <name>deamido-NAD(+)</name>
        <dbReference type="ChEBI" id="CHEBI:58437"/>
    </ligand>
</feature>
<feature type="binding site" evidence="1">
    <location>
        <position position="172"/>
    </location>
    <ligand>
        <name>ATP</name>
        <dbReference type="ChEBI" id="CHEBI:30616"/>
    </ligand>
</feature>
<feature type="binding site" evidence="1">
    <location>
        <position position="194"/>
    </location>
    <ligand>
        <name>ATP</name>
        <dbReference type="ChEBI" id="CHEBI:30616"/>
    </ligand>
</feature>
<feature type="binding site" evidence="1">
    <location>
        <begin position="254"/>
        <end position="255"/>
    </location>
    <ligand>
        <name>deamido-NAD(+)</name>
        <dbReference type="ChEBI" id="CHEBI:58437"/>
    </ligand>
</feature>
<accession>A2BLB9</accession>
<name>NADE_HYPBU</name>
<evidence type="ECO:0000255" key="1">
    <source>
        <dbReference type="HAMAP-Rule" id="MF_00193"/>
    </source>
</evidence>
<reference key="1">
    <citation type="journal article" date="2007" name="Archaea">
        <title>The genome of Hyperthermus butylicus: a sulfur-reducing, peptide fermenting, neutrophilic Crenarchaeote growing up to 108 degrees C.</title>
        <authorList>
            <person name="Bruegger K."/>
            <person name="Chen L."/>
            <person name="Stark M."/>
            <person name="Zibat A."/>
            <person name="Redder P."/>
            <person name="Ruepp A."/>
            <person name="Awayez M."/>
            <person name="She Q."/>
            <person name="Garrett R.A."/>
            <person name="Klenk H.-P."/>
        </authorList>
    </citation>
    <scope>NUCLEOTIDE SEQUENCE [LARGE SCALE GENOMIC DNA]</scope>
    <source>
        <strain>DSM 5456 / JCM 9403 / PLM1-5</strain>
    </source>
</reference>
<gene>
    <name evidence="1" type="primary">nadE</name>
    <name type="ordered locus">Hbut_0932</name>
</gene>
<comment type="function">
    <text evidence="1">Catalyzes the ATP-dependent amidation of deamido-NAD to form NAD. Uses ammonia as a nitrogen source.</text>
</comment>
<comment type="catalytic activity">
    <reaction evidence="1">
        <text>deamido-NAD(+) + NH4(+) + ATP = AMP + diphosphate + NAD(+) + H(+)</text>
        <dbReference type="Rhea" id="RHEA:21188"/>
        <dbReference type="ChEBI" id="CHEBI:15378"/>
        <dbReference type="ChEBI" id="CHEBI:28938"/>
        <dbReference type="ChEBI" id="CHEBI:30616"/>
        <dbReference type="ChEBI" id="CHEBI:33019"/>
        <dbReference type="ChEBI" id="CHEBI:57540"/>
        <dbReference type="ChEBI" id="CHEBI:58437"/>
        <dbReference type="ChEBI" id="CHEBI:456215"/>
        <dbReference type="EC" id="6.3.1.5"/>
    </reaction>
</comment>
<comment type="pathway">
    <text evidence="1">Cofactor biosynthesis; NAD(+) biosynthesis; NAD(+) from deamido-NAD(+) (ammonia route): step 1/1.</text>
</comment>
<comment type="subunit">
    <text evidence="1">Homodimer.</text>
</comment>
<comment type="similarity">
    <text evidence="1">Belongs to the NAD synthetase family.</text>
</comment>
<organism>
    <name type="scientific">Hyperthermus butylicus (strain DSM 5456 / JCM 9403 / PLM1-5)</name>
    <dbReference type="NCBI Taxonomy" id="415426"/>
    <lineage>
        <taxon>Archaea</taxon>
        <taxon>Thermoproteota</taxon>
        <taxon>Thermoprotei</taxon>
        <taxon>Desulfurococcales</taxon>
        <taxon>Pyrodictiaceae</taxon>
        <taxon>Hyperthermus</taxon>
    </lineage>
</organism>
<sequence length="276" mass="30514">MRITLNELLDLDYEGVARSIEEFIKGYVESSGAKGVVVGLSGGVDSTTTLYLLVRALGPERVLVLVMPDSDVTPEEDVHDAVGIAERLGVRYKLIDIKPIVASYLVAMGEAPDRRSKGNLRARVRMTLLYLYANMEGLLVAGTGDRSELLIGYFTKYGDGAVDFLPIGCLYKSQVRRLALHLGVPEKIALKPSSPRLWPGQLAEDELGMKYEEIDLILYALFDKGLSPEEAAKATGLPIEKVRRVLELHRASEHKRSLPPAPDPAATVWRFRRRKG</sequence>
<protein>
    <recommendedName>
        <fullName evidence="1">NH(3)-dependent NAD(+) synthetase</fullName>
        <ecNumber evidence="1">6.3.1.5</ecNumber>
    </recommendedName>
</protein>
<dbReference type="EC" id="6.3.1.5" evidence="1"/>
<dbReference type="EMBL" id="CP000493">
    <property type="protein sequence ID" value="ABM80780.1"/>
    <property type="molecule type" value="Genomic_DNA"/>
</dbReference>
<dbReference type="RefSeq" id="WP_011822098.1">
    <property type="nucleotide sequence ID" value="NC_008818.1"/>
</dbReference>
<dbReference type="SMR" id="A2BLB9"/>
<dbReference type="STRING" id="415426.Hbut_0932"/>
<dbReference type="EnsemblBacteria" id="ABM80780">
    <property type="protein sequence ID" value="ABM80780"/>
    <property type="gene ID" value="Hbut_0932"/>
</dbReference>
<dbReference type="GeneID" id="4781885"/>
<dbReference type="KEGG" id="hbu:Hbut_0932"/>
<dbReference type="eggNOG" id="arCOG00069">
    <property type="taxonomic scope" value="Archaea"/>
</dbReference>
<dbReference type="HOGENOM" id="CLU_059327_1_1_2"/>
<dbReference type="OrthoDB" id="39312at2157"/>
<dbReference type="UniPathway" id="UPA00253">
    <property type="reaction ID" value="UER00333"/>
</dbReference>
<dbReference type="Proteomes" id="UP000002593">
    <property type="component" value="Chromosome"/>
</dbReference>
<dbReference type="GO" id="GO:0005737">
    <property type="term" value="C:cytoplasm"/>
    <property type="evidence" value="ECO:0007669"/>
    <property type="project" value="InterPro"/>
</dbReference>
<dbReference type="GO" id="GO:0005524">
    <property type="term" value="F:ATP binding"/>
    <property type="evidence" value="ECO:0007669"/>
    <property type="project" value="UniProtKB-UniRule"/>
</dbReference>
<dbReference type="GO" id="GO:0004359">
    <property type="term" value="F:glutaminase activity"/>
    <property type="evidence" value="ECO:0007669"/>
    <property type="project" value="InterPro"/>
</dbReference>
<dbReference type="GO" id="GO:0046872">
    <property type="term" value="F:metal ion binding"/>
    <property type="evidence" value="ECO:0007669"/>
    <property type="project" value="UniProtKB-KW"/>
</dbReference>
<dbReference type="GO" id="GO:0003952">
    <property type="term" value="F:NAD+ synthase (glutamine-hydrolyzing) activity"/>
    <property type="evidence" value="ECO:0007669"/>
    <property type="project" value="InterPro"/>
</dbReference>
<dbReference type="GO" id="GO:0008795">
    <property type="term" value="F:NAD+ synthase activity"/>
    <property type="evidence" value="ECO:0007669"/>
    <property type="project" value="UniProtKB-UniRule"/>
</dbReference>
<dbReference type="GO" id="GO:0009435">
    <property type="term" value="P:NAD biosynthetic process"/>
    <property type="evidence" value="ECO:0007669"/>
    <property type="project" value="UniProtKB-UniRule"/>
</dbReference>
<dbReference type="CDD" id="cd00553">
    <property type="entry name" value="NAD_synthase"/>
    <property type="match status" value="1"/>
</dbReference>
<dbReference type="FunFam" id="3.40.50.620:FF:000106">
    <property type="entry name" value="Glutamine-dependent NAD(+) synthetase"/>
    <property type="match status" value="1"/>
</dbReference>
<dbReference type="Gene3D" id="3.40.50.620">
    <property type="entry name" value="HUPs"/>
    <property type="match status" value="1"/>
</dbReference>
<dbReference type="HAMAP" id="MF_00193">
    <property type="entry name" value="NadE_ammonia_dep"/>
    <property type="match status" value="1"/>
</dbReference>
<dbReference type="InterPro" id="IPR022310">
    <property type="entry name" value="NAD/GMP_synthase"/>
</dbReference>
<dbReference type="InterPro" id="IPR003694">
    <property type="entry name" value="NAD_synthase"/>
</dbReference>
<dbReference type="InterPro" id="IPR022926">
    <property type="entry name" value="NH(3)-dep_NAD(+)_synth"/>
</dbReference>
<dbReference type="InterPro" id="IPR014729">
    <property type="entry name" value="Rossmann-like_a/b/a_fold"/>
</dbReference>
<dbReference type="NCBIfam" id="TIGR00552">
    <property type="entry name" value="nadE"/>
    <property type="match status" value="1"/>
</dbReference>
<dbReference type="NCBIfam" id="NF010587">
    <property type="entry name" value="PRK13980.1"/>
    <property type="match status" value="1"/>
</dbReference>
<dbReference type="PANTHER" id="PTHR23090:SF9">
    <property type="entry name" value="GLUTAMINE-DEPENDENT NAD(+) SYNTHETASE"/>
    <property type="match status" value="1"/>
</dbReference>
<dbReference type="PANTHER" id="PTHR23090">
    <property type="entry name" value="NH 3 /GLUTAMINE-DEPENDENT NAD + SYNTHETASE"/>
    <property type="match status" value="1"/>
</dbReference>
<dbReference type="Pfam" id="PF02540">
    <property type="entry name" value="NAD_synthase"/>
    <property type="match status" value="1"/>
</dbReference>
<dbReference type="SUPFAM" id="SSF52402">
    <property type="entry name" value="Adenine nucleotide alpha hydrolases-like"/>
    <property type="match status" value="1"/>
</dbReference>
<proteinExistence type="inferred from homology"/>
<keyword id="KW-0067">ATP-binding</keyword>
<keyword id="KW-0436">Ligase</keyword>
<keyword id="KW-0460">Magnesium</keyword>
<keyword id="KW-0479">Metal-binding</keyword>
<keyword id="KW-0520">NAD</keyword>
<keyword id="KW-0547">Nucleotide-binding</keyword>
<keyword id="KW-1185">Reference proteome</keyword>